<keyword id="KW-0037">Angiogenesis</keyword>
<keyword id="KW-0175">Coiled coil</keyword>
<keyword id="KW-1015">Disulfide bond</keyword>
<keyword id="KW-0325">Glycoprotein</keyword>
<keyword id="KW-1185">Reference proteome</keyword>
<keyword id="KW-0964">Secreted</keyword>
<keyword id="KW-0732">Signal</keyword>
<evidence type="ECO:0000250" key="1"/>
<evidence type="ECO:0000255" key="2"/>
<evidence type="ECO:0000255" key="3">
    <source>
        <dbReference type="PROSITE-ProRule" id="PRU00739"/>
    </source>
</evidence>
<evidence type="ECO:0000256" key="4">
    <source>
        <dbReference type="SAM" id="MobiDB-lite"/>
    </source>
</evidence>
<evidence type="ECO:0000305" key="5"/>
<reference key="1">
    <citation type="submission" date="2006-02" db="EMBL/GenBank/DDBJ databases">
        <authorList>
            <consortium name="NIH - Mammalian Gene Collection (MGC) project"/>
        </authorList>
    </citation>
    <scope>NUCLEOTIDE SEQUENCE [LARGE SCALE MRNA]</scope>
    <source>
        <strain>Hereford</strain>
        <tissue>Testis</tissue>
    </source>
</reference>
<accession>Q24K15</accession>
<feature type="signal peptide" evidence="2">
    <location>
        <begin position="1"/>
        <end position="22"/>
    </location>
</feature>
<feature type="chain" id="PRO_0000278836" description="Angiopoietin-4">
    <location>
        <begin position="23"/>
        <end position="498"/>
    </location>
</feature>
<feature type="domain" description="Fibrinogen C-terminal" evidence="3">
    <location>
        <begin position="277"/>
        <end position="497"/>
    </location>
</feature>
<feature type="region of interest" description="Disordered" evidence="4">
    <location>
        <begin position="51"/>
        <end position="80"/>
    </location>
</feature>
<feature type="coiled-coil region" evidence="2">
    <location>
        <begin position="85"/>
        <end position="109"/>
    </location>
</feature>
<feature type="coiled-coil region" evidence="2">
    <location>
        <begin position="186"/>
        <end position="254"/>
    </location>
</feature>
<feature type="glycosylation site" description="N-linked (GlcNAc...) asparagine" evidence="2">
    <location>
        <position position="96"/>
    </location>
</feature>
<feature type="glycosylation site" description="N-linked (GlcNAc...) asparagine" evidence="2">
    <location>
        <position position="126"/>
    </location>
</feature>
<feature type="glycosylation site" description="N-linked (GlcNAc...) asparagine" evidence="2">
    <location>
        <position position="158"/>
    </location>
</feature>
<feature type="glycosylation site" description="N-linked (GlcNAc...) asparagine" evidence="2">
    <location>
        <position position="247"/>
    </location>
</feature>
<feature type="glycosylation site" description="N-linked (GlcNAc...) asparagine" evidence="2">
    <location>
        <position position="295"/>
    </location>
</feature>
<feature type="glycosylation site" description="N-linked (GlcNAc...) asparagine" evidence="2">
    <location>
        <position position="306"/>
    </location>
</feature>
<feature type="glycosylation site" description="N-linked (GlcNAc...) asparagine" evidence="2">
    <location>
        <position position="332"/>
    </location>
</feature>
<feature type="glycosylation site" description="N-linked (GlcNAc...) asparagine" evidence="2">
    <location>
        <position position="424"/>
    </location>
</feature>
<feature type="disulfide bond" evidence="3">
    <location>
        <begin position="286"/>
        <end position="315"/>
    </location>
</feature>
<feature type="disulfide bond" evidence="3">
    <location>
        <begin position="439"/>
        <end position="452"/>
    </location>
</feature>
<proteinExistence type="evidence at transcript level"/>
<name>ANGP4_BOVIN</name>
<organism>
    <name type="scientific">Bos taurus</name>
    <name type="common">Bovine</name>
    <dbReference type="NCBI Taxonomy" id="9913"/>
    <lineage>
        <taxon>Eukaryota</taxon>
        <taxon>Metazoa</taxon>
        <taxon>Chordata</taxon>
        <taxon>Craniata</taxon>
        <taxon>Vertebrata</taxon>
        <taxon>Euteleostomi</taxon>
        <taxon>Mammalia</taxon>
        <taxon>Eutheria</taxon>
        <taxon>Laurasiatheria</taxon>
        <taxon>Artiodactyla</taxon>
        <taxon>Ruminantia</taxon>
        <taxon>Pecora</taxon>
        <taxon>Bovidae</taxon>
        <taxon>Bovinae</taxon>
        <taxon>Bos</taxon>
    </lineage>
</organism>
<protein>
    <recommendedName>
        <fullName>Angiopoietin-4</fullName>
        <shortName>ANG-4</shortName>
    </recommendedName>
</protein>
<dbReference type="EMBL" id="BC114033">
    <property type="protein sequence ID" value="AAI14034.1"/>
    <property type="molecule type" value="mRNA"/>
</dbReference>
<dbReference type="RefSeq" id="NP_001069951.1">
    <property type="nucleotide sequence ID" value="NM_001076483.2"/>
</dbReference>
<dbReference type="SMR" id="Q24K15"/>
<dbReference type="FunCoup" id="Q24K15">
    <property type="interactions" value="395"/>
</dbReference>
<dbReference type="STRING" id="9913.ENSBTAP00000029073"/>
<dbReference type="GlyCosmos" id="Q24K15">
    <property type="glycosylation" value="8 sites, No reported glycans"/>
</dbReference>
<dbReference type="GlyGen" id="Q24K15">
    <property type="glycosylation" value="8 sites"/>
</dbReference>
<dbReference type="PaxDb" id="9913-ENSBTAP00000029073"/>
<dbReference type="GeneID" id="617915"/>
<dbReference type="KEGG" id="bta:617915"/>
<dbReference type="CTD" id="51378"/>
<dbReference type="eggNOG" id="KOG2579">
    <property type="taxonomic scope" value="Eukaryota"/>
</dbReference>
<dbReference type="InParanoid" id="Q24K15"/>
<dbReference type="OrthoDB" id="9933375at2759"/>
<dbReference type="Proteomes" id="UP000009136">
    <property type="component" value="Unplaced"/>
</dbReference>
<dbReference type="GO" id="GO:0062023">
    <property type="term" value="C:collagen-containing extracellular matrix"/>
    <property type="evidence" value="ECO:0000318"/>
    <property type="project" value="GO_Central"/>
</dbReference>
<dbReference type="GO" id="GO:0005615">
    <property type="term" value="C:extracellular space"/>
    <property type="evidence" value="ECO:0000318"/>
    <property type="project" value="GO_Central"/>
</dbReference>
<dbReference type="GO" id="GO:0030971">
    <property type="term" value="F:receptor tyrosine kinase binding"/>
    <property type="evidence" value="ECO:0000318"/>
    <property type="project" value="GO_Central"/>
</dbReference>
<dbReference type="GO" id="GO:0001525">
    <property type="term" value="P:angiogenesis"/>
    <property type="evidence" value="ECO:0007669"/>
    <property type="project" value="UniProtKB-KW"/>
</dbReference>
<dbReference type="GO" id="GO:0007596">
    <property type="term" value="P:blood coagulation"/>
    <property type="evidence" value="ECO:0007669"/>
    <property type="project" value="InterPro"/>
</dbReference>
<dbReference type="GO" id="GO:0007165">
    <property type="term" value="P:signal transduction"/>
    <property type="evidence" value="ECO:0000318"/>
    <property type="project" value="GO_Central"/>
</dbReference>
<dbReference type="CDD" id="cd00087">
    <property type="entry name" value="FReD"/>
    <property type="match status" value="1"/>
</dbReference>
<dbReference type="FunFam" id="3.90.215.10:FF:000001">
    <property type="entry name" value="Tenascin isoform 1"/>
    <property type="match status" value="1"/>
</dbReference>
<dbReference type="Gene3D" id="3.90.215.10">
    <property type="entry name" value="Gamma Fibrinogen, chain A, domain 1"/>
    <property type="match status" value="1"/>
</dbReference>
<dbReference type="InterPro" id="IPR037579">
    <property type="entry name" value="FIB_ANG-like"/>
</dbReference>
<dbReference type="InterPro" id="IPR036056">
    <property type="entry name" value="Fibrinogen-like_C"/>
</dbReference>
<dbReference type="InterPro" id="IPR014716">
    <property type="entry name" value="Fibrinogen_a/b/g_C_1"/>
</dbReference>
<dbReference type="InterPro" id="IPR002181">
    <property type="entry name" value="Fibrinogen_a/b/g_C_dom"/>
</dbReference>
<dbReference type="InterPro" id="IPR020837">
    <property type="entry name" value="Fibrinogen_CS"/>
</dbReference>
<dbReference type="NCBIfam" id="NF040941">
    <property type="entry name" value="GGGWT_bact"/>
    <property type="match status" value="1"/>
</dbReference>
<dbReference type="PANTHER" id="PTHR47221">
    <property type="entry name" value="FIBRINOGEN ALPHA CHAIN"/>
    <property type="match status" value="1"/>
</dbReference>
<dbReference type="PANTHER" id="PTHR47221:SF5">
    <property type="entry name" value="FIBRINOGEN C-TERMINAL DOMAIN-CONTAINING PROTEIN"/>
    <property type="match status" value="1"/>
</dbReference>
<dbReference type="Pfam" id="PF25443">
    <property type="entry name" value="ANG-1"/>
    <property type="match status" value="1"/>
</dbReference>
<dbReference type="Pfam" id="PF00147">
    <property type="entry name" value="Fibrinogen_C"/>
    <property type="match status" value="1"/>
</dbReference>
<dbReference type="SMART" id="SM00186">
    <property type="entry name" value="FBG"/>
    <property type="match status" value="1"/>
</dbReference>
<dbReference type="SUPFAM" id="SSF56496">
    <property type="entry name" value="Fibrinogen C-terminal domain-like"/>
    <property type="match status" value="1"/>
</dbReference>
<dbReference type="PROSITE" id="PS00514">
    <property type="entry name" value="FIBRINOGEN_C_1"/>
    <property type="match status" value="1"/>
</dbReference>
<dbReference type="PROSITE" id="PS51406">
    <property type="entry name" value="FIBRINOGEN_C_2"/>
    <property type="match status" value="1"/>
</dbReference>
<comment type="function">
    <text evidence="1">Binds to TEK/TIE2, modulating ANGPT1 signaling. Can induce tyrosine phosphorylation of TEK/TIE2. Promotes endothelial cell survival, migration and angiogenesis (By similarity).</text>
</comment>
<comment type="subunit">
    <text evidence="1">Homodimer; disulfide-linked. Interacts with TEK/TIE2 (By similarity).</text>
</comment>
<comment type="subcellular location">
    <subcellularLocation>
        <location evidence="5">Secreted</location>
    </subcellularLocation>
</comment>
<gene>
    <name type="primary">ANGPT4</name>
</gene>
<sequence length="498" mass="55929">MPSPPAMLLGGLLLIVASTTVAQRRGQEAAGRRRAHRVQHGQCSYTFVLPEPEPCPPEPEAFGGSNSLQRDSPAATLNLGDWPSQRMRQLEKMLENNTQWLQKLERYIQVNLRLELAQAQQHMVQNQTATMLELGTSLLTQTTAQTRKLTDVEAQVLNQTSRMEIQLLETSLSTNKLEKQLLLQGHELHRLQGHNSALETRVQALETQQQAELASLSGEKERLRRLLGRQSGALAGLERTLRAASSNSSLLQRQQHQLLESVQRLVRVMAQGPASMRAADQLFQDCAEIQRFGANASGIYTIHVANVTEPRKVFCDMEASGGGWTLIQRRENGSVNFQRNWKDYKQGFGNPAGEHWLGNEVVHQLTSRATYSLRVELQDWEGNEAYAQYEHFQLGSEAQLYRLSLSGYSGSAGRQSSLVLQGTNFSTRDADNDNCLCKCAQMLSGGWWFDACGLSNLNGIYYPARHHVRKLNGIRWHYFQGPSYSLRTTRMMVRPSGI</sequence>